<accession>W7FI62</accession>
<comment type="function">
    <text evidence="2 4 5 6">Nutrient transporter (PubMed:25733858, PubMed:31776516, PubMed:32764664). Substrate transport is pH-dependent (PubMed:25733858, PubMed:31776516). Can transport arginine, lysine, histidine and peptides (PubMed:25733858, PubMed:31776516, PubMed:32764664). Involved in maintaining the osmotic homeostasis of the digestive vacuole (By similarity). Required for the normal asexual intraerythrocytic proliferation of parasites (By similarity). Can transport Fe(2+) and Fe(3+) (By similarity).</text>
</comment>
<comment type="catalytic activity">
    <reaction evidence="4 5">
        <text>L-arginine(in) = L-arginine(out)</text>
        <dbReference type="Rhea" id="RHEA:32143"/>
        <dbReference type="ChEBI" id="CHEBI:32682"/>
    </reaction>
</comment>
<comment type="catalytic activity">
    <reaction evidence="4">
        <text>L-lysine(in) = L-lysine(out)</text>
        <dbReference type="Rhea" id="RHEA:70935"/>
        <dbReference type="ChEBI" id="CHEBI:32551"/>
    </reaction>
</comment>
<comment type="catalytic activity">
    <reaction evidence="4">
        <text>L-histidine(out) = L-histidine(in)</text>
        <dbReference type="Rhea" id="RHEA:72807"/>
        <dbReference type="ChEBI" id="CHEBI:57595"/>
    </reaction>
</comment>
<comment type="catalytic activity">
    <reaction evidence="1">
        <text>Fe(3+)(in) = Fe(3+)(out)</text>
        <dbReference type="Rhea" id="RHEA:34971"/>
        <dbReference type="ChEBI" id="CHEBI:29034"/>
    </reaction>
</comment>
<comment type="catalytic activity">
    <reaction evidence="1">
        <text>Fe(2+)(in) = Fe(2+)(out)</text>
        <dbReference type="Rhea" id="RHEA:28486"/>
        <dbReference type="ChEBI" id="CHEBI:29033"/>
    </reaction>
</comment>
<comment type="biophysicochemical properties">
    <kinetics>
        <KM evidence="5">0.8 uM for chloroquine</KM>
        <KM evidence="5">1.3 uM for arginine</KM>
        <KM evidence="6">208 uM for VDPVNF peptide</KM>
        <KM evidence="7">6.4 uM for lumefantrine</KM>
        <KM evidence="7">1.7 uM for mefloquine</KM>
        <Vmax evidence="5">90.0 nmol/min/mg enzyme for chloroquine</Vmax>
        <Vmax evidence="5">190.0 nmol/min/mg enzyme for arginine</Vmax>
        <text evidence="5">kcat is 0.2 sec(-1) with chloroquine as substrate (PubMed:31776516). kcat is 0.4 sec(-1) with arginine as substrate (PubMed:31776516).</text>
    </kinetics>
</comment>
<comment type="subunit">
    <text evidence="5">Monomer.</text>
</comment>
<comment type="subcellular location">
    <subcellularLocation>
        <location evidence="2">Membrane</location>
        <topology evidence="3">Multi-pass membrane protein</topology>
    </subcellularLocation>
    <subcellularLocation>
        <location evidence="2">Vacuole membrane</location>
        <topology evidence="3">Multi-pass membrane protein</topology>
    </subcellularLocation>
    <text evidence="2">Localizes to the parasite digestive vacuole, the site of chloroquine action.</text>
</comment>
<comment type="polymorphism">
    <text evidence="4 5 6 7">The 7G8 strain is chloroquine-resistant in contrast to the 3D7 strain which is chloroquine-sensitive. Compared to the 3D7 strain, the CRT protein from the 7G8 strain shows increased chloroquine transport rates and reduced capacity for the transport of natural substrates (PubMed:25733858, PubMed:31776516, PubMed:32764664). In contrast to the CRT protein from 3D7 strain that does not transport lumefantrine or mefloquine, the CRT protein from the 7G8 strain exhibits significant transport activity for both drugs (PubMed:35507548).</text>
</comment>
<comment type="miscellaneous">
    <text evidence="4 5 6 7">Can function as a drug transporter (PubMed:25733858, PubMed:31776516, PubMed:32764664). Can transport chloroquine and verapamil (PubMed:25733858). Active transport of chloroquine and arginine requires a membrane potential and a directed pH gradient: 5.5-&gt;7.5, corresponding to the digestive vacuole pH gradient of the parasite (PubMed:25733858, PubMed:31776516). Binding with chloroquine and piperaquine is inhibited by verapamil, amodiaquine and excess arginine (PubMed:31776516). Can transport lumefantrine or mefloquine (PubMed:35507548).</text>
</comment>
<comment type="similarity">
    <text evidence="10">Belongs to the CRT-like transporter family.</text>
</comment>
<proteinExistence type="evidence at protein level"/>
<sequence length="424" mass="48649">MKFASKKNNQKNSSKNDERYRELDNLVQEGNGSRLGGGSCLGKCAHVFKLIFKEIKDNIFIYILSIIYLSVSVMNTIFAKRTLNKIGNYSFVTSETHNFICMIMFFIVYSLFGNKKGNSKERHRSFNLQFFAISMLDACSVILAFIGLTRTTGNIQSFVLQLSIPINMFFCFLILRYRYHLYNYLGAVIIVVTIALVEMKLSFETQEENSIIFNLVLISSLIPVCFSNMTREIVFKKYKIDILRLNAMVSFFQLFTSCLILPVYTLPFLKQLHLPYNEIWTNIKNGFACLFLGRNTVVENCGLGMAKLCDDCDGAWKTFALFSFFDICDNLITSYIIDKFSTMTYTIVSCIQGPALAIAYYFKFLAGDVVREPRLLDFVTLFGYLFGSIIYRVGNIILERKKMRNEENEDSEGELTNVDSIITQ</sequence>
<feature type="chain" id="PRO_0000459375" description="Chloroquine resistance transporter">
    <location>
        <begin position="1"/>
        <end position="424"/>
    </location>
</feature>
<feature type="topological domain" description="Cytoplasmic" evidence="10">
    <location>
        <begin position="1"/>
        <end position="49"/>
    </location>
</feature>
<feature type="intramembrane region" evidence="3">
    <location>
        <begin position="50"/>
        <end position="58"/>
    </location>
</feature>
<feature type="transmembrane region" description="Helical" evidence="3">
    <location>
        <begin position="59"/>
        <end position="83"/>
    </location>
</feature>
<feature type="topological domain" description="Vacuolar" evidence="10">
    <location>
        <begin position="84"/>
        <end position="89"/>
    </location>
</feature>
<feature type="transmembrane region" description="Helical" evidence="3">
    <location>
        <begin position="90"/>
        <end position="111"/>
    </location>
</feature>
<feature type="topological domain" description="Cytoplasmic" evidence="10">
    <location>
        <begin position="112"/>
        <end position="126"/>
    </location>
</feature>
<feature type="transmembrane region" description="Helical" evidence="3">
    <location>
        <begin position="127"/>
        <end position="147"/>
    </location>
</feature>
<feature type="topological domain" description="Vacuolar" evidence="10">
    <location>
        <begin position="148"/>
        <end position="152"/>
    </location>
</feature>
<feature type="transmembrane region" description="Helical" evidence="3">
    <location>
        <begin position="153"/>
        <end position="173"/>
    </location>
</feature>
<feature type="topological domain" description="Cytoplasmic" evidence="10">
    <location>
        <begin position="174"/>
        <end position="180"/>
    </location>
</feature>
<feature type="transmembrane region" description="Helical" evidence="3">
    <location>
        <begin position="181"/>
        <end position="202"/>
    </location>
</feature>
<feature type="topological domain" description="Vacuolar" evidence="10">
    <location>
        <begin position="203"/>
        <end position="210"/>
    </location>
</feature>
<feature type="transmembrane region" description="Helical" evidence="3">
    <location>
        <begin position="211"/>
        <end position="236"/>
    </location>
</feature>
<feature type="topological domain" description="Cytoplasmic" evidence="10">
    <location>
        <begin position="237"/>
        <end position="241"/>
    </location>
</feature>
<feature type="transmembrane region" description="Helical" evidence="3">
    <location>
        <begin position="242"/>
        <end position="263"/>
    </location>
</feature>
<feature type="topological domain" description="Vacuolar" evidence="10">
    <location>
        <begin position="264"/>
        <end position="279"/>
    </location>
</feature>
<feature type="intramembrane region" evidence="3">
    <location>
        <begin position="280"/>
        <end position="292"/>
    </location>
</feature>
<feature type="topological domain" description="Vacuolar" evidence="10">
    <location>
        <begin position="293"/>
        <end position="314"/>
    </location>
</feature>
<feature type="transmembrane region" description="Helical" evidence="3">
    <location>
        <begin position="315"/>
        <end position="339"/>
    </location>
</feature>
<feature type="topological domain" description="Cytoplasmic" evidence="10">
    <location>
        <begin position="340"/>
        <end position="343"/>
    </location>
</feature>
<feature type="transmembrane region" description="Helical" evidence="3">
    <location>
        <begin position="344"/>
        <end position="361"/>
    </location>
</feature>
<feature type="topological domain" description="Vacuolar" evidence="10">
    <location>
        <begin position="362"/>
        <end position="374"/>
    </location>
</feature>
<feature type="transmembrane region" description="Helical" evidence="3">
    <location>
        <begin position="375"/>
        <end position="397"/>
    </location>
</feature>
<feature type="topological domain" description="Cytoplasmic" evidence="10">
    <location>
        <begin position="398"/>
        <end position="424"/>
    </location>
</feature>
<feature type="site" description="pH sensor, predicted to act as a hydrogen acceptor for interactions that may accelerate progression through the transport cycle. Not involved in the proton transfer pathway" evidence="2">
    <location>
        <position position="207"/>
    </location>
</feature>
<feature type="disulfide bond" evidence="5 13">
    <location>
        <begin position="289"/>
        <end position="312"/>
    </location>
</feature>
<feature type="disulfide bond" evidence="5 13">
    <location>
        <begin position="301"/>
        <end position="309"/>
    </location>
</feature>
<feature type="mutagenesis site" description="No effect on chloroquine and piperaquine binding at pH 7.5. Decreases piperaquine binding affinity and increases piperaquine transport rates at pH 5.5. Decreases chloroquine transport rates with no effect on chloroquine binding affinity at pH 5.5. Results in the increased survival of parasites grown in the presence of piperaquine." evidence="5">
    <original>F</original>
    <variation>I</variation>
    <location>
        <position position="145"/>
    </location>
</feature>
<feature type="mutagenesis site" description="No effect on chloroquine binding affinity and transport." evidence="5">
    <original>C</original>
    <variation>A</variation>
    <location>
        <position position="289"/>
    </location>
</feature>
<feature type="mutagenesis site" description="No effect on chloroquine binding affinity and transport." evidence="5">
    <original>C</original>
    <variation>A</variation>
    <location>
        <position position="301"/>
    </location>
</feature>
<feature type="mutagenesis site" description="No effect on chloroquine and piperaquine binding affinity at pH 7.5. Decreases piperaquine binding affinity and increases piperaquine transport rates at pH 5.5. Decreases chloroquine binding affinity and transport rates at pH 5.5. Results in the increased survival of parasites grown in the presence of piperaquine." evidence="5">
    <original>C</original>
    <variation>R</variation>
    <location>
        <position position="350"/>
    </location>
</feature>
<feature type="helix" evidence="14">
    <location>
        <begin position="50"/>
        <end position="57"/>
    </location>
</feature>
<feature type="helix" evidence="14">
    <location>
        <begin position="60"/>
        <end position="82"/>
    </location>
</feature>
<feature type="turn" evidence="14">
    <location>
        <begin position="83"/>
        <end position="85"/>
    </location>
</feature>
<feature type="helix" evidence="14">
    <location>
        <begin position="90"/>
        <end position="111"/>
    </location>
</feature>
<feature type="helix" evidence="14">
    <location>
        <begin position="127"/>
        <end position="147"/>
    </location>
</feature>
<feature type="helix" evidence="14">
    <location>
        <begin position="153"/>
        <end position="173"/>
    </location>
</feature>
<feature type="helix" evidence="14">
    <location>
        <begin position="181"/>
        <end position="204"/>
    </location>
</feature>
<feature type="helix" evidence="14">
    <location>
        <begin position="211"/>
        <end position="236"/>
    </location>
</feature>
<feature type="helix" evidence="14">
    <location>
        <begin position="242"/>
        <end position="258"/>
    </location>
</feature>
<feature type="helix" evidence="14">
    <location>
        <begin position="261"/>
        <end position="263"/>
    </location>
</feature>
<feature type="helix" evidence="14">
    <location>
        <begin position="280"/>
        <end position="290"/>
    </location>
</feature>
<feature type="strand" evidence="14">
    <location>
        <begin position="305"/>
        <end position="307"/>
    </location>
</feature>
<feature type="helix" evidence="14">
    <location>
        <begin position="315"/>
        <end position="339"/>
    </location>
</feature>
<feature type="helix" evidence="14">
    <location>
        <begin position="344"/>
        <end position="350"/>
    </location>
</feature>
<feature type="helix" evidence="14">
    <location>
        <begin position="352"/>
        <end position="359"/>
    </location>
</feature>
<feature type="turn" evidence="14">
    <location>
        <begin position="363"/>
        <end position="365"/>
    </location>
</feature>
<feature type="helix" evidence="14">
    <location>
        <begin position="375"/>
        <end position="403"/>
    </location>
</feature>
<name>CRT_PLAF8</name>
<dbReference type="EMBL" id="KE123602">
    <property type="protein sequence ID" value="EUR74088.1"/>
    <property type="molecule type" value="Genomic_DNA"/>
</dbReference>
<dbReference type="PDB" id="6UKJ">
    <property type="method" value="EM"/>
    <property type="resolution" value="3.30 A"/>
    <property type="chains" value="A=47-405"/>
</dbReference>
<dbReference type="PDBsum" id="6UKJ"/>
<dbReference type="EMDB" id="EMD-20806"/>
<dbReference type="SMR" id="W7FI62"/>
<dbReference type="ABCD" id="W7FI62">
    <property type="antibodies" value="4 sequenced antibodies"/>
</dbReference>
<dbReference type="EnsemblProtists" id="EUR74088">
    <property type="protein sequence ID" value="EUR74088"/>
    <property type="gene ID" value="PFBG_01689"/>
</dbReference>
<dbReference type="VEuPathDB" id="PlasmoDB:Pf7G8_070014400"/>
<dbReference type="OrthoDB" id="1276at418107"/>
<dbReference type="Proteomes" id="UP000030688">
    <property type="component" value="Unassembled WGS sequence"/>
</dbReference>
<dbReference type="GO" id="GO:0005774">
    <property type="term" value="C:vacuolar membrane"/>
    <property type="evidence" value="ECO:0007669"/>
    <property type="project" value="UniProtKB-SubCell"/>
</dbReference>
<dbReference type="GO" id="GO:0042910">
    <property type="term" value="F:xenobiotic transmembrane transporter activity"/>
    <property type="evidence" value="ECO:0007669"/>
    <property type="project" value="InterPro"/>
</dbReference>
<dbReference type="GO" id="GO:0006865">
    <property type="term" value="P:amino acid transport"/>
    <property type="evidence" value="ECO:0007669"/>
    <property type="project" value="UniProtKB-KW"/>
</dbReference>
<dbReference type="InterPro" id="IPR013936">
    <property type="entry name" value="CRT-like"/>
</dbReference>
<dbReference type="InterPro" id="IPR017258">
    <property type="entry name" value="Transprt_Chloroquine"/>
</dbReference>
<dbReference type="PANTHER" id="PTHR31326">
    <property type="entry name" value="PROTEIN CLT2, CHLOROPLASTIC"/>
    <property type="match status" value="1"/>
</dbReference>
<dbReference type="PANTHER" id="PTHR31326:SF1">
    <property type="entry name" value="PROTEIN CLT2, CHLOROPLASTIC"/>
    <property type="match status" value="1"/>
</dbReference>
<dbReference type="Pfam" id="PF08627">
    <property type="entry name" value="CRT-like"/>
    <property type="match status" value="1"/>
</dbReference>
<dbReference type="PIRSF" id="PIRSF037671">
    <property type="entry name" value="Transprt_Chloroquine_res"/>
    <property type="match status" value="1"/>
</dbReference>
<reference evidence="12" key="1">
    <citation type="submission" date="2007-11" db="EMBL/GenBank/DDBJ databases">
        <authorList>
            <consortium name="The Broad Institute Genome Sequencing Platform"/>
            <person name="Volkman S.K."/>
            <person name="Daily J.P."/>
            <person name="Sarr O."/>
            <person name="Ndiaye D."/>
            <person name="Ndir O."/>
            <person name="Mboup S."/>
            <person name="Lukens A."/>
            <person name="Stange-Thomann N."/>
            <person name="Mauceli E."/>
            <person name="Gnerre S."/>
            <person name="Jaffe D."/>
            <person name="Zainoun J."/>
            <person name="Wiegand R.C."/>
            <person name="Birren B."/>
            <person name="Galagan J."/>
            <person name="Lander E."/>
            <person name="Wirth D.F."/>
        </authorList>
    </citation>
    <scope>NUCLEOTIDE SEQUENCE [LARGE SCALE GENOMIC DNA]</scope>
    <source>
        <strain evidence="12">7G8</strain>
    </source>
</reference>
<reference evidence="12" key="2">
    <citation type="submission" date="2013-02" db="EMBL/GenBank/DDBJ databases">
        <title>The Genome Sequence of Plasmodium falciparum 7G8.</title>
        <authorList>
            <consortium name="The Broad Institute Genome Sequencing Platform"/>
            <consortium name="The Broad Institute Genome Sequencing Center for Infectious Disease"/>
            <person name="Neafsey D."/>
            <person name="Cheeseman I."/>
            <person name="Volkman S."/>
            <person name="Adams J."/>
            <person name="Walker B."/>
            <person name="Young S.K."/>
            <person name="Zeng Q."/>
            <person name="Gargeya S."/>
            <person name="Fitzgerald M."/>
            <person name="Haas B."/>
            <person name="Abouelleil A."/>
            <person name="Alvarado L."/>
            <person name="Arachchi H.M."/>
            <person name="Berlin A.M."/>
            <person name="Chapman S.B."/>
            <person name="Dewar J."/>
            <person name="Goldberg J."/>
            <person name="Griggs A."/>
            <person name="Gujja S."/>
            <person name="Hansen M."/>
            <person name="Howarth C."/>
            <person name="Imamovic A."/>
            <person name="Larimer J."/>
            <person name="McCowan C."/>
            <person name="Murphy C."/>
            <person name="Neiman D."/>
            <person name="Pearson M."/>
            <person name="Priest M."/>
            <person name="Roberts A."/>
            <person name="Saif S."/>
            <person name="Shea T."/>
            <person name="Sisk P."/>
            <person name="Sykes S."/>
            <person name="Wortman J."/>
            <person name="Nusbaum C."/>
            <person name="Birren B."/>
        </authorList>
    </citation>
    <scope>NUCLEOTIDE SEQUENCE [LARGE SCALE GENOMIC DNA]</scope>
    <source>
        <strain evidence="12">7G8</strain>
    </source>
</reference>
<reference evidence="10" key="3">
    <citation type="journal article" date="2015" name="Proc. Natl. Acad. Sci. U.S.A.">
        <title>Plasmodium falciparum chloroquine resistance transporter is a H+-coupled polyspecific nutrient and drug exporter.</title>
        <authorList>
            <person name="Juge N."/>
            <person name="Moriyama S."/>
            <person name="Miyaji T."/>
            <person name="Kawakami M."/>
            <person name="Iwai H."/>
            <person name="Fukui T."/>
            <person name="Nelson N."/>
            <person name="Omote H."/>
            <person name="Moriyama Y."/>
        </authorList>
    </citation>
    <scope>FUNCTION</scope>
    <scope>TRANSPORTER ACTIVITY</scope>
    <scope>SUBSTRATE SPECIFICITY</scope>
    <scope>POLYMORPHISM</scope>
</reference>
<reference evidence="10" key="4">
    <citation type="journal article" date="2020" name="Nat. Commun.">
        <title>The natural function of the malaria parasite's chloroquine resistance transporter.</title>
        <authorList>
            <person name="Shafik S.H."/>
            <person name="Cobbold S.A."/>
            <person name="Barkat K."/>
            <person name="Richards S.N."/>
            <person name="Lancaster N.S."/>
            <person name="Llinas M."/>
            <person name="Hogg S.J."/>
            <person name="Summers R.L."/>
            <person name="McConville M.J."/>
            <person name="Martin R.E."/>
        </authorList>
    </citation>
    <scope>FUNCTION</scope>
    <scope>SUBSTRATE SPECIFICITY</scope>
    <scope>BIOPHYSICOCHEMICAL PROPERTIES</scope>
    <scope>POLYMORPHISM</scope>
</reference>
<reference evidence="13" key="5">
    <citation type="journal article" date="2019" name="Nature">
        <title>Structure and drug resistance of the Plasmodium falciparum transporter PfCRT.</title>
        <authorList>
            <person name="Kim J."/>
            <person name="Tan Y.Z."/>
            <person name="Wicht K.J."/>
            <person name="Erramilli S.K."/>
            <person name="Dhingra S.K."/>
            <person name="Okombo J."/>
            <person name="Vendome J."/>
            <person name="Hagenah L.M."/>
            <person name="Giacometti S.I."/>
            <person name="Warren A.L."/>
            <person name="Nosol K."/>
            <person name="Roepe P.D."/>
            <person name="Potter C.S."/>
            <person name="Carragher B."/>
            <person name="Kossiakoff A.A."/>
            <person name="Quick M."/>
            <person name="Fidock D.A."/>
            <person name="Mancia F."/>
        </authorList>
    </citation>
    <scope>STRUCTURE BY ELECTRON MICROSCOPY (3.30 ANGSTROMS) OF 47-405</scope>
    <scope>FUNCTION</scope>
    <scope>TRANSPORTER ACTIVITY</scope>
    <scope>BIOPHYSICOCHEMICAL PROPERTIES</scope>
    <scope>SUBUNIT</scope>
    <scope>SUBSTRATE SPECIFICITY</scope>
    <scope>POLYMORPHISM</scope>
    <scope>DISULFIDE BONDS</scope>
    <scope>MUTAGENESIS OF PHE-145; CYS-289; CYS-301 AND CYS-350</scope>
</reference>
<reference key="6">
    <citation type="journal article" date="2022" name="PLoS Biol.">
        <title>Mechanistic basis for multidrug resistance and collateral drug sensitivity conferred to the malaria parasite by polymorphisms in PfMDR1 and PfCRT.</title>
        <authorList>
            <person name="Shafik S.H."/>
            <person name="Richards S.N."/>
            <person name="Corry B."/>
            <person name="Martin R.E."/>
        </authorList>
    </citation>
    <scope>BIOPHYSICOCHEMICAL PROPERTIES</scope>
    <scope>POLYMORPHISM</scope>
    <source>
        <strain evidence="9">Dd2</strain>
    </source>
</reference>
<organism evidence="12">
    <name type="scientific">Plasmodium falciparum (isolate 7G8)</name>
    <dbReference type="NCBI Taxonomy" id="57266"/>
    <lineage>
        <taxon>Eukaryota</taxon>
        <taxon>Sar</taxon>
        <taxon>Alveolata</taxon>
        <taxon>Apicomplexa</taxon>
        <taxon>Aconoidasida</taxon>
        <taxon>Haemosporida</taxon>
        <taxon>Plasmodiidae</taxon>
        <taxon>Plasmodium</taxon>
        <taxon>Plasmodium (Laverania)</taxon>
    </lineage>
</organism>
<keyword id="KW-0002">3D-structure</keyword>
<keyword id="KW-0029">Amino-acid transport</keyword>
<keyword id="KW-1015">Disulfide bond</keyword>
<keyword id="KW-0406">Ion transport</keyword>
<keyword id="KW-0408">Iron</keyword>
<keyword id="KW-0410">Iron transport</keyword>
<keyword id="KW-0472">Membrane</keyword>
<keyword id="KW-0812">Transmembrane</keyword>
<keyword id="KW-1133">Transmembrane helix</keyword>
<keyword id="KW-0813">Transport</keyword>
<keyword id="KW-0926">Vacuole</keyword>
<gene>
    <name evidence="10" type="primary">CRT</name>
    <name evidence="10" type="synonym">CG10</name>
    <name evidence="11" type="ORF">PFBG_01689</name>
</gene>
<protein>
    <recommendedName>
        <fullName evidence="11">Chloroquine resistance transporter</fullName>
        <shortName evidence="8 9">PfCRT</shortName>
    </recommendedName>
</protein>
<evidence type="ECO:0000250" key="1">
    <source>
        <dbReference type="UniProtKB" id="Q8IBZ9"/>
    </source>
</evidence>
<evidence type="ECO:0000250" key="2">
    <source>
        <dbReference type="UniProtKB" id="Q9N623"/>
    </source>
</evidence>
<evidence type="ECO:0000255" key="3"/>
<evidence type="ECO:0000269" key="4">
    <source>
    </source>
</evidence>
<evidence type="ECO:0000269" key="5">
    <source>
    </source>
</evidence>
<evidence type="ECO:0000269" key="6">
    <source>
    </source>
</evidence>
<evidence type="ECO:0000269" key="7">
    <source>
    </source>
</evidence>
<evidence type="ECO:0000303" key="8">
    <source>
    </source>
</evidence>
<evidence type="ECO:0000303" key="9">
    <source>
    </source>
</evidence>
<evidence type="ECO:0000305" key="10"/>
<evidence type="ECO:0000312" key="11">
    <source>
        <dbReference type="EMBL" id="EUR74088.1"/>
    </source>
</evidence>
<evidence type="ECO:0000312" key="12">
    <source>
        <dbReference type="Proteomes" id="UP000030688"/>
    </source>
</evidence>
<evidence type="ECO:0007744" key="13">
    <source>
        <dbReference type="PDB" id="6UKJ"/>
    </source>
</evidence>
<evidence type="ECO:0007829" key="14">
    <source>
        <dbReference type="PDB" id="6UKJ"/>
    </source>
</evidence>